<organism>
    <name type="scientific">Saccharomyces cerevisiae (strain ATCC 204508 / S288c)</name>
    <name type="common">Baker's yeast</name>
    <dbReference type="NCBI Taxonomy" id="559292"/>
    <lineage>
        <taxon>Eukaryota</taxon>
        <taxon>Fungi</taxon>
        <taxon>Dikarya</taxon>
        <taxon>Ascomycota</taxon>
        <taxon>Saccharomycotina</taxon>
        <taxon>Saccharomycetes</taxon>
        <taxon>Saccharomycetales</taxon>
        <taxon>Saccharomycetaceae</taxon>
        <taxon>Saccharomyces</taxon>
    </lineage>
</organism>
<proteinExistence type="uncertain"/>
<protein>
    <recommendedName>
        <fullName evidence="2">Putative uncharacterized membrane protein YAL047W-A</fullName>
    </recommendedName>
</protein>
<name>YA047_YEAST</name>
<feature type="chain" id="PRO_0000430973" description="Putative uncharacterized membrane protein YAL047W-A">
    <location>
        <begin position="1"/>
        <end position="109"/>
    </location>
</feature>
<feature type="transmembrane region" description="Helical; Name=1" evidence="1">
    <location>
        <begin position="24"/>
        <end position="44"/>
    </location>
</feature>
<feature type="transmembrane region" description="Helical; Name=2" evidence="1">
    <location>
        <begin position="68"/>
        <end position="88"/>
    </location>
</feature>
<keyword id="KW-0472">Membrane</keyword>
<keyword id="KW-0812">Transmembrane</keyword>
<keyword id="KW-1133">Transmembrane helix</keyword>
<gene>
    <name evidence="4" type="ordered locus">YAL047W-A</name>
</gene>
<dbReference type="EMBL" id="KJ412209">
    <property type="protein sequence ID" value="AHX39252.1"/>
    <property type="molecule type" value="Genomic_DNA"/>
</dbReference>
<dbReference type="SMR" id="A0A023PZE2"/>
<dbReference type="PaxDb" id="4932-YAL047W-A"/>
<dbReference type="EnsemblFungi" id="YAL047W-A_mRNA">
    <property type="protein sequence ID" value="YAL047W-A"/>
    <property type="gene ID" value="YAL047W-A"/>
</dbReference>
<dbReference type="AGR" id="SGD:S000028733"/>
<dbReference type="SGD" id="S000028733">
    <property type="gene designation" value="YAL047W-A"/>
</dbReference>
<dbReference type="HOGENOM" id="CLU_2185454_0_0_1"/>
<dbReference type="GO" id="GO:0016020">
    <property type="term" value="C:membrane"/>
    <property type="evidence" value="ECO:0007669"/>
    <property type="project" value="UniProtKB-SubCell"/>
</dbReference>
<reference key="1">
    <citation type="journal article" date="1995" name="Proc. Natl. Acad. Sci. U.S.A.">
        <title>The nucleotide sequence of chromosome I from Saccharomyces cerevisiae.</title>
        <authorList>
            <person name="Bussey H."/>
            <person name="Kaback D.B."/>
            <person name="Zhong W.-W."/>
            <person name="Vo D.H."/>
            <person name="Clark M.W."/>
            <person name="Fortin N."/>
            <person name="Hall J."/>
            <person name="Ouellette B.F.F."/>
            <person name="Keng T."/>
            <person name="Barton A.B."/>
            <person name="Su Y."/>
            <person name="Davies C.J."/>
            <person name="Storms R.K."/>
        </authorList>
    </citation>
    <scope>NUCLEOTIDE SEQUENCE [LARGE SCALE GENOMIC DNA]</scope>
    <source>
        <strain>ATCC 204508 / S288c</strain>
    </source>
</reference>
<reference key="2">
    <citation type="journal article" date="2014" name="G3 (Bethesda)">
        <title>The reference genome sequence of Saccharomyces cerevisiae: Then and now.</title>
        <authorList>
            <person name="Engel S.R."/>
            <person name="Dietrich F.S."/>
            <person name="Fisk D.G."/>
            <person name="Binkley G."/>
            <person name="Balakrishnan R."/>
            <person name="Costanzo M.C."/>
            <person name="Dwight S.S."/>
            <person name="Hitz B.C."/>
            <person name="Karra K."/>
            <person name="Nash R.S."/>
            <person name="Weng S."/>
            <person name="Wong E.D."/>
            <person name="Lloyd P."/>
            <person name="Skrzypek M.S."/>
            <person name="Miyasato S.R."/>
            <person name="Simison M."/>
            <person name="Cherry J.M."/>
        </authorList>
    </citation>
    <scope>GENOME REANNOTATION</scope>
    <source>
        <strain>ATCC 204508 / S288c</strain>
    </source>
</reference>
<sequence>MRSESEVSISTVFLGEYVGDDEKSLGILMGGSTSCMVGMNSAFVNDTIRLDLPTPSSPQITTRIVSLVIVLFNTLVFRSPLFLFSIFICLIYKFHSCFEGKPLYQMLKI</sequence>
<accession>A0A023PZE2</accession>
<comment type="subcellular location">
    <subcellularLocation>
        <location evidence="1">Membrane</location>
        <topology evidence="1">Multi-pass membrane protein</topology>
    </subcellularLocation>
</comment>
<comment type="miscellaneous">
    <text evidence="2">Partially overlaps GEM1.</text>
</comment>
<comment type="caution">
    <text evidence="3">Product of a dubious gene prediction unlikely to encode a functional protein. Because of that it is not part of the S.cerevisiae S288c complete/reference proteome set.</text>
</comment>
<evidence type="ECO:0000255" key="1"/>
<evidence type="ECO:0000305" key="2"/>
<evidence type="ECO:0000305" key="3">
    <source>
    </source>
</evidence>
<evidence type="ECO:0000312" key="4">
    <source>
        <dbReference type="SGD" id="S000028733"/>
    </source>
</evidence>